<accession>Q6F704</accession>
<dbReference type="EC" id="6.3.2.8" evidence="1"/>
<dbReference type="EMBL" id="CR543861">
    <property type="protein sequence ID" value="CAG70161.1"/>
    <property type="molecule type" value="Genomic_DNA"/>
</dbReference>
<dbReference type="RefSeq" id="WP_004923336.1">
    <property type="nucleotide sequence ID" value="NC_005966.1"/>
</dbReference>
<dbReference type="SMR" id="Q6F704"/>
<dbReference type="STRING" id="202950.GCA_001485005_01695"/>
<dbReference type="GeneID" id="45235694"/>
<dbReference type="KEGG" id="aci:ACIAD3516"/>
<dbReference type="eggNOG" id="COG0773">
    <property type="taxonomic scope" value="Bacteria"/>
</dbReference>
<dbReference type="HOGENOM" id="CLU_028104_2_2_6"/>
<dbReference type="OrthoDB" id="9804126at2"/>
<dbReference type="BioCyc" id="ASP62977:ACIAD_RS15900-MONOMER"/>
<dbReference type="UniPathway" id="UPA00219"/>
<dbReference type="Proteomes" id="UP000000430">
    <property type="component" value="Chromosome"/>
</dbReference>
<dbReference type="GO" id="GO:0005737">
    <property type="term" value="C:cytoplasm"/>
    <property type="evidence" value="ECO:0007669"/>
    <property type="project" value="UniProtKB-SubCell"/>
</dbReference>
<dbReference type="GO" id="GO:0005524">
    <property type="term" value="F:ATP binding"/>
    <property type="evidence" value="ECO:0007669"/>
    <property type="project" value="UniProtKB-UniRule"/>
</dbReference>
<dbReference type="GO" id="GO:0008763">
    <property type="term" value="F:UDP-N-acetylmuramate-L-alanine ligase activity"/>
    <property type="evidence" value="ECO:0007669"/>
    <property type="project" value="UniProtKB-UniRule"/>
</dbReference>
<dbReference type="GO" id="GO:0051301">
    <property type="term" value="P:cell division"/>
    <property type="evidence" value="ECO:0007669"/>
    <property type="project" value="UniProtKB-KW"/>
</dbReference>
<dbReference type="GO" id="GO:0071555">
    <property type="term" value="P:cell wall organization"/>
    <property type="evidence" value="ECO:0007669"/>
    <property type="project" value="UniProtKB-KW"/>
</dbReference>
<dbReference type="GO" id="GO:0009252">
    <property type="term" value="P:peptidoglycan biosynthetic process"/>
    <property type="evidence" value="ECO:0007669"/>
    <property type="project" value="UniProtKB-UniRule"/>
</dbReference>
<dbReference type="GO" id="GO:0008360">
    <property type="term" value="P:regulation of cell shape"/>
    <property type="evidence" value="ECO:0007669"/>
    <property type="project" value="UniProtKB-KW"/>
</dbReference>
<dbReference type="FunFam" id="3.40.1190.10:FF:000001">
    <property type="entry name" value="UDP-N-acetylmuramate--L-alanine ligase"/>
    <property type="match status" value="1"/>
</dbReference>
<dbReference type="FunFam" id="3.40.50.720:FF:000046">
    <property type="entry name" value="UDP-N-acetylmuramate--L-alanine ligase"/>
    <property type="match status" value="1"/>
</dbReference>
<dbReference type="Gene3D" id="3.90.190.20">
    <property type="entry name" value="Mur ligase, C-terminal domain"/>
    <property type="match status" value="1"/>
</dbReference>
<dbReference type="Gene3D" id="3.40.1190.10">
    <property type="entry name" value="Mur-like, catalytic domain"/>
    <property type="match status" value="1"/>
</dbReference>
<dbReference type="Gene3D" id="3.40.50.720">
    <property type="entry name" value="NAD(P)-binding Rossmann-like Domain"/>
    <property type="match status" value="1"/>
</dbReference>
<dbReference type="HAMAP" id="MF_00046">
    <property type="entry name" value="MurC"/>
    <property type="match status" value="1"/>
</dbReference>
<dbReference type="InterPro" id="IPR036565">
    <property type="entry name" value="Mur-like_cat_sf"/>
</dbReference>
<dbReference type="InterPro" id="IPR004101">
    <property type="entry name" value="Mur_ligase_C"/>
</dbReference>
<dbReference type="InterPro" id="IPR036615">
    <property type="entry name" value="Mur_ligase_C_dom_sf"/>
</dbReference>
<dbReference type="InterPro" id="IPR013221">
    <property type="entry name" value="Mur_ligase_cen"/>
</dbReference>
<dbReference type="InterPro" id="IPR000713">
    <property type="entry name" value="Mur_ligase_N"/>
</dbReference>
<dbReference type="InterPro" id="IPR050061">
    <property type="entry name" value="MurCDEF_pg_biosynth"/>
</dbReference>
<dbReference type="InterPro" id="IPR005758">
    <property type="entry name" value="UDP-N-AcMur_Ala_ligase_MurC"/>
</dbReference>
<dbReference type="NCBIfam" id="TIGR01082">
    <property type="entry name" value="murC"/>
    <property type="match status" value="1"/>
</dbReference>
<dbReference type="PANTHER" id="PTHR43445:SF3">
    <property type="entry name" value="UDP-N-ACETYLMURAMATE--L-ALANINE LIGASE"/>
    <property type="match status" value="1"/>
</dbReference>
<dbReference type="PANTHER" id="PTHR43445">
    <property type="entry name" value="UDP-N-ACETYLMURAMATE--L-ALANINE LIGASE-RELATED"/>
    <property type="match status" value="1"/>
</dbReference>
<dbReference type="Pfam" id="PF01225">
    <property type="entry name" value="Mur_ligase"/>
    <property type="match status" value="1"/>
</dbReference>
<dbReference type="Pfam" id="PF02875">
    <property type="entry name" value="Mur_ligase_C"/>
    <property type="match status" value="1"/>
</dbReference>
<dbReference type="Pfam" id="PF08245">
    <property type="entry name" value="Mur_ligase_M"/>
    <property type="match status" value="1"/>
</dbReference>
<dbReference type="SUPFAM" id="SSF51984">
    <property type="entry name" value="MurCD N-terminal domain"/>
    <property type="match status" value="1"/>
</dbReference>
<dbReference type="SUPFAM" id="SSF53623">
    <property type="entry name" value="MurD-like peptide ligases, catalytic domain"/>
    <property type="match status" value="1"/>
</dbReference>
<dbReference type="SUPFAM" id="SSF53244">
    <property type="entry name" value="MurD-like peptide ligases, peptide-binding domain"/>
    <property type="match status" value="1"/>
</dbReference>
<feature type="chain" id="PRO_0000182043" description="UDP-N-acetylmuramate--L-alanine ligase">
    <location>
        <begin position="1"/>
        <end position="482"/>
    </location>
</feature>
<feature type="binding site" evidence="1">
    <location>
        <begin position="129"/>
        <end position="135"/>
    </location>
    <ligand>
        <name>ATP</name>
        <dbReference type="ChEBI" id="CHEBI:30616"/>
    </ligand>
</feature>
<organism>
    <name type="scientific">Acinetobacter baylyi (strain ATCC 33305 / BD413 / ADP1)</name>
    <dbReference type="NCBI Taxonomy" id="62977"/>
    <lineage>
        <taxon>Bacteria</taxon>
        <taxon>Pseudomonadati</taxon>
        <taxon>Pseudomonadota</taxon>
        <taxon>Gammaproteobacteria</taxon>
        <taxon>Moraxellales</taxon>
        <taxon>Moraxellaceae</taxon>
        <taxon>Acinetobacter</taxon>
    </lineage>
</organism>
<sequence>MSPTTPADQAKKLIKVPEMRRIKHIYFVGIGGAGMCGIAEVLKNQGYKVSGSDIKASKTTAHLEQKGIKVYIGHTADNLKAVDVLVVSTAIDPENPEVKAAIENRIPVVRRAEMLGELMRYRHGIAVAGTHGKTTTTSLLTTMLAEENMDPTYVIGGLLNRTGVNAALGASRFIVAEADESDASFLYLQPMAAIITNVDADHMDTYGGSFDKLKDTFVEFIHRLPFYGLAVVCGDDHNVREIMPRFGRPTLTYGFNEDNDIRAVDVVQEGMQSHFTVLRKDREPLRLTVNQPGLHNILNALAAIGVATDEGVSDAAIARALEGFSGVGRRFQVQGEFELGEGSVKLVDDYGHHPKEVEATIKAARQSHPDRRLVMMFQPHRFSRTRDCFDDFVEVLSQVDQLLLLEVYPAGEKPIVGADSRTLARSIRLRGDVEPILVDPVEGNLPNIIQKVLQPNDLLLTQGAGNVGAISVDLAQQQLYLK</sequence>
<gene>
    <name evidence="1" type="primary">murC</name>
    <name type="ordered locus">ACIAD3516</name>
</gene>
<evidence type="ECO:0000255" key="1">
    <source>
        <dbReference type="HAMAP-Rule" id="MF_00046"/>
    </source>
</evidence>
<name>MURC_ACIAD</name>
<proteinExistence type="inferred from homology"/>
<comment type="function">
    <text evidence="1">Cell wall formation.</text>
</comment>
<comment type="catalytic activity">
    <reaction evidence="1">
        <text>UDP-N-acetyl-alpha-D-muramate + L-alanine + ATP = UDP-N-acetyl-alpha-D-muramoyl-L-alanine + ADP + phosphate + H(+)</text>
        <dbReference type="Rhea" id="RHEA:23372"/>
        <dbReference type="ChEBI" id="CHEBI:15378"/>
        <dbReference type="ChEBI" id="CHEBI:30616"/>
        <dbReference type="ChEBI" id="CHEBI:43474"/>
        <dbReference type="ChEBI" id="CHEBI:57972"/>
        <dbReference type="ChEBI" id="CHEBI:70757"/>
        <dbReference type="ChEBI" id="CHEBI:83898"/>
        <dbReference type="ChEBI" id="CHEBI:456216"/>
        <dbReference type="EC" id="6.3.2.8"/>
    </reaction>
</comment>
<comment type="pathway">
    <text evidence="1">Cell wall biogenesis; peptidoglycan biosynthesis.</text>
</comment>
<comment type="subcellular location">
    <subcellularLocation>
        <location evidence="1">Cytoplasm</location>
    </subcellularLocation>
</comment>
<comment type="similarity">
    <text evidence="1">Belongs to the MurCDEF family.</text>
</comment>
<keyword id="KW-0067">ATP-binding</keyword>
<keyword id="KW-0131">Cell cycle</keyword>
<keyword id="KW-0132">Cell division</keyword>
<keyword id="KW-0133">Cell shape</keyword>
<keyword id="KW-0961">Cell wall biogenesis/degradation</keyword>
<keyword id="KW-0963">Cytoplasm</keyword>
<keyword id="KW-0436">Ligase</keyword>
<keyword id="KW-0547">Nucleotide-binding</keyword>
<keyword id="KW-0573">Peptidoglycan synthesis</keyword>
<protein>
    <recommendedName>
        <fullName evidence="1">UDP-N-acetylmuramate--L-alanine ligase</fullName>
        <ecNumber evidence="1">6.3.2.8</ecNumber>
    </recommendedName>
    <alternativeName>
        <fullName evidence="1">UDP-N-acetylmuramoyl-L-alanine synthetase</fullName>
    </alternativeName>
</protein>
<reference key="1">
    <citation type="journal article" date="2004" name="Nucleic Acids Res.">
        <title>Unique features revealed by the genome sequence of Acinetobacter sp. ADP1, a versatile and naturally transformation competent bacterium.</title>
        <authorList>
            <person name="Barbe V."/>
            <person name="Vallenet D."/>
            <person name="Fonknechten N."/>
            <person name="Kreimeyer A."/>
            <person name="Oztas S."/>
            <person name="Labarre L."/>
            <person name="Cruveiller S."/>
            <person name="Robert C."/>
            <person name="Duprat S."/>
            <person name="Wincker P."/>
            <person name="Ornston L.N."/>
            <person name="Weissenbach J."/>
            <person name="Marliere P."/>
            <person name="Cohen G.N."/>
            <person name="Medigue C."/>
        </authorList>
    </citation>
    <scope>NUCLEOTIDE SEQUENCE [LARGE SCALE GENOMIC DNA]</scope>
    <source>
        <strain>ATCC 33305 / BD413 / ADP1</strain>
    </source>
</reference>